<gene>
    <name evidence="1" type="primary">dapA</name>
    <name type="ordered locus">CYB_0048</name>
</gene>
<sequence length="306" mass="33103">MNFGRVLTAMVTPFTDEGELNYDEAARLADYLATHGSDGLVVCGTTGESPTLTWQEEYELFRVVRDAVAGRAKVIAGTGSNSTREAIEATKKAAQLGLDGSLQVVPYYNKPTQAGLYEHFKAIAQASDLPILLYNIPSRTGASLQPETVAQLAELETVVAIKEASGMMDVASEIRRLTPSRFAIYSGDDSLTLPLLSLGGSGVVSVASHLVGLQLQELIQSYIRGQHDQALAHHLRLFPLFKVLFIETNPVPIKAALEMQGWRVGRARLPLAPLQPSSLQVLRQVLEEMGLLAESKGSEQMATKVS</sequence>
<dbReference type="EC" id="4.3.3.7" evidence="1"/>
<dbReference type="EMBL" id="CP000240">
    <property type="protein sequence ID" value="ABD01049.1"/>
    <property type="molecule type" value="Genomic_DNA"/>
</dbReference>
<dbReference type="SMR" id="Q2JQ67"/>
<dbReference type="STRING" id="321332.CYB_0048"/>
<dbReference type="KEGG" id="cyb:CYB_0048"/>
<dbReference type="eggNOG" id="COG0329">
    <property type="taxonomic scope" value="Bacteria"/>
</dbReference>
<dbReference type="HOGENOM" id="CLU_049343_7_1_3"/>
<dbReference type="OrthoDB" id="9782828at2"/>
<dbReference type="UniPathway" id="UPA00034">
    <property type="reaction ID" value="UER00017"/>
</dbReference>
<dbReference type="Proteomes" id="UP000001938">
    <property type="component" value="Chromosome"/>
</dbReference>
<dbReference type="GO" id="GO:0005829">
    <property type="term" value="C:cytosol"/>
    <property type="evidence" value="ECO:0007669"/>
    <property type="project" value="TreeGrafter"/>
</dbReference>
<dbReference type="GO" id="GO:0008840">
    <property type="term" value="F:4-hydroxy-tetrahydrodipicolinate synthase activity"/>
    <property type="evidence" value="ECO:0007669"/>
    <property type="project" value="UniProtKB-UniRule"/>
</dbReference>
<dbReference type="GO" id="GO:0019877">
    <property type="term" value="P:diaminopimelate biosynthetic process"/>
    <property type="evidence" value="ECO:0007669"/>
    <property type="project" value="UniProtKB-UniRule"/>
</dbReference>
<dbReference type="GO" id="GO:0009089">
    <property type="term" value="P:lysine biosynthetic process via diaminopimelate"/>
    <property type="evidence" value="ECO:0007669"/>
    <property type="project" value="UniProtKB-UniRule"/>
</dbReference>
<dbReference type="CDD" id="cd00950">
    <property type="entry name" value="DHDPS"/>
    <property type="match status" value="1"/>
</dbReference>
<dbReference type="Gene3D" id="3.20.20.70">
    <property type="entry name" value="Aldolase class I"/>
    <property type="match status" value="1"/>
</dbReference>
<dbReference type="HAMAP" id="MF_00418">
    <property type="entry name" value="DapA"/>
    <property type="match status" value="1"/>
</dbReference>
<dbReference type="InterPro" id="IPR013785">
    <property type="entry name" value="Aldolase_TIM"/>
</dbReference>
<dbReference type="InterPro" id="IPR005263">
    <property type="entry name" value="DapA"/>
</dbReference>
<dbReference type="InterPro" id="IPR002220">
    <property type="entry name" value="DapA-like"/>
</dbReference>
<dbReference type="InterPro" id="IPR020625">
    <property type="entry name" value="Schiff_base-form_aldolases_AS"/>
</dbReference>
<dbReference type="InterPro" id="IPR020624">
    <property type="entry name" value="Schiff_base-form_aldolases_CS"/>
</dbReference>
<dbReference type="NCBIfam" id="TIGR00674">
    <property type="entry name" value="dapA"/>
    <property type="match status" value="1"/>
</dbReference>
<dbReference type="PANTHER" id="PTHR12128:SF66">
    <property type="entry name" value="4-HYDROXY-2-OXOGLUTARATE ALDOLASE, MITOCHONDRIAL"/>
    <property type="match status" value="1"/>
</dbReference>
<dbReference type="PANTHER" id="PTHR12128">
    <property type="entry name" value="DIHYDRODIPICOLINATE SYNTHASE"/>
    <property type="match status" value="1"/>
</dbReference>
<dbReference type="Pfam" id="PF00701">
    <property type="entry name" value="DHDPS"/>
    <property type="match status" value="1"/>
</dbReference>
<dbReference type="PIRSF" id="PIRSF001365">
    <property type="entry name" value="DHDPS"/>
    <property type="match status" value="1"/>
</dbReference>
<dbReference type="PRINTS" id="PR00146">
    <property type="entry name" value="DHPICSNTHASE"/>
</dbReference>
<dbReference type="SMART" id="SM01130">
    <property type="entry name" value="DHDPS"/>
    <property type="match status" value="1"/>
</dbReference>
<dbReference type="SUPFAM" id="SSF51569">
    <property type="entry name" value="Aldolase"/>
    <property type="match status" value="1"/>
</dbReference>
<dbReference type="PROSITE" id="PS00665">
    <property type="entry name" value="DHDPS_1"/>
    <property type="match status" value="1"/>
</dbReference>
<dbReference type="PROSITE" id="PS00666">
    <property type="entry name" value="DHDPS_2"/>
    <property type="match status" value="1"/>
</dbReference>
<name>DAPA_SYNJB</name>
<organism>
    <name type="scientific">Synechococcus sp. (strain JA-2-3B'a(2-13))</name>
    <name type="common">Cyanobacteria bacterium Yellowstone B-Prime</name>
    <dbReference type="NCBI Taxonomy" id="321332"/>
    <lineage>
        <taxon>Bacteria</taxon>
        <taxon>Bacillati</taxon>
        <taxon>Cyanobacteriota</taxon>
        <taxon>Cyanophyceae</taxon>
        <taxon>Synechococcales</taxon>
        <taxon>Synechococcaceae</taxon>
        <taxon>Synechococcus</taxon>
    </lineage>
</organism>
<proteinExistence type="inferred from homology"/>
<comment type="function">
    <text evidence="1">Catalyzes the condensation of (S)-aspartate-beta-semialdehyde [(S)-ASA] and pyruvate to 4-hydroxy-tetrahydrodipicolinate (HTPA).</text>
</comment>
<comment type="catalytic activity">
    <reaction evidence="1">
        <text>L-aspartate 4-semialdehyde + pyruvate = (2S,4S)-4-hydroxy-2,3,4,5-tetrahydrodipicolinate + H2O + H(+)</text>
        <dbReference type="Rhea" id="RHEA:34171"/>
        <dbReference type="ChEBI" id="CHEBI:15361"/>
        <dbReference type="ChEBI" id="CHEBI:15377"/>
        <dbReference type="ChEBI" id="CHEBI:15378"/>
        <dbReference type="ChEBI" id="CHEBI:67139"/>
        <dbReference type="ChEBI" id="CHEBI:537519"/>
        <dbReference type="EC" id="4.3.3.7"/>
    </reaction>
</comment>
<comment type="pathway">
    <text evidence="1">Amino-acid biosynthesis; L-lysine biosynthesis via DAP pathway; (S)-tetrahydrodipicolinate from L-aspartate: step 3/4.</text>
</comment>
<comment type="subunit">
    <text evidence="1">Homotetramer; dimer of dimers.</text>
</comment>
<comment type="subcellular location">
    <subcellularLocation>
        <location evidence="1">Cytoplasm</location>
    </subcellularLocation>
</comment>
<comment type="similarity">
    <text evidence="1">Belongs to the DapA family.</text>
</comment>
<comment type="caution">
    <text evidence="2">Was originally thought to be a dihydrodipicolinate synthase (DHDPS), catalyzing the condensation of (S)-aspartate-beta-semialdehyde [(S)-ASA] and pyruvate to dihydrodipicolinate (DHDP). However, it was shown in E.coli that the product of the enzymatic reaction is not dihydrodipicolinate but in fact (4S)-4-hydroxy-2,3,4,5-tetrahydro-(2S)-dipicolinic acid (HTPA), and that the consecutive dehydration reaction leading to DHDP is not spontaneous but catalyzed by DapB.</text>
</comment>
<feature type="chain" id="PRO_0000340991" description="4-hydroxy-tetrahydrodipicolinate synthase">
    <location>
        <begin position="1"/>
        <end position="306"/>
    </location>
</feature>
<feature type="active site" description="Proton donor/acceptor" evidence="1">
    <location>
        <position position="134"/>
    </location>
</feature>
<feature type="active site" description="Schiff-base intermediate with substrate" evidence="1">
    <location>
        <position position="162"/>
    </location>
</feature>
<feature type="binding site" evidence="1">
    <location>
        <position position="46"/>
    </location>
    <ligand>
        <name>pyruvate</name>
        <dbReference type="ChEBI" id="CHEBI:15361"/>
    </ligand>
</feature>
<feature type="binding site" evidence="1">
    <location>
        <position position="204"/>
    </location>
    <ligand>
        <name>pyruvate</name>
        <dbReference type="ChEBI" id="CHEBI:15361"/>
    </ligand>
</feature>
<feature type="site" description="Part of a proton relay during catalysis" evidence="1">
    <location>
        <position position="45"/>
    </location>
</feature>
<feature type="site" description="Part of a proton relay during catalysis" evidence="1">
    <location>
        <position position="108"/>
    </location>
</feature>
<protein>
    <recommendedName>
        <fullName evidence="1">4-hydroxy-tetrahydrodipicolinate synthase</fullName>
        <shortName evidence="1">HTPA synthase</shortName>
        <ecNumber evidence="1">4.3.3.7</ecNumber>
    </recommendedName>
</protein>
<keyword id="KW-0028">Amino-acid biosynthesis</keyword>
<keyword id="KW-0963">Cytoplasm</keyword>
<keyword id="KW-0220">Diaminopimelate biosynthesis</keyword>
<keyword id="KW-0456">Lyase</keyword>
<keyword id="KW-0457">Lysine biosynthesis</keyword>
<keyword id="KW-1185">Reference proteome</keyword>
<keyword id="KW-0704">Schiff base</keyword>
<reference key="1">
    <citation type="journal article" date="2007" name="ISME J.">
        <title>Population level functional diversity in a microbial community revealed by comparative genomic and metagenomic analyses.</title>
        <authorList>
            <person name="Bhaya D."/>
            <person name="Grossman A.R."/>
            <person name="Steunou A.-S."/>
            <person name="Khuri N."/>
            <person name="Cohan F.M."/>
            <person name="Hamamura N."/>
            <person name="Melendrez M.C."/>
            <person name="Bateson M.M."/>
            <person name="Ward D.M."/>
            <person name="Heidelberg J.F."/>
        </authorList>
    </citation>
    <scope>NUCLEOTIDE SEQUENCE [LARGE SCALE GENOMIC DNA]</scope>
    <source>
        <strain>JA-2-3B'a(2-13)</strain>
    </source>
</reference>
<evidence type="ECO:0000255" key="1">
    <source>
        <dbReference type="HAMAP-Rule" id="MF_00418"/>
    </source>
</evidence>
<evidence type="ECO:0000305" key="2"/>
<accession>Q2JQ67</accession>